<sequence>MPVVAVIDYEMGNLHSVCKGLEKAGATPIITHCHQELTKADAVILPGVGAFDPAVQSLRSRDLEQPIKDTIASGKPFLGICLGLQILFESSAEGNQPGLGIIKGKVRRFVWEPGITIPHMGWNQLELTQPKSILWEHLPPQPWVYFVHSYYVDPFEPQVRAATVTHGTQTVTAAIAHENLMAVQFHPEKSSNIGLQILSNFVSQVREKIAA</sequence>
<proteinExistence type="inferred from homology"/>
<gene>
    <name evidence="1" type="primary">hisH</name>
    <name type="ordered locus">all1368</name>
</gene>
<organism>
    <name type="scientific">Nostoc sp. (strain PCC 7120 / SAG 25.82 / UTEX 2576)</name>
    <dbReference type="NCBI Taxonomy" id="103690"/>
    <lineage>
        <taxon>Bacteria</taxon>
        <taxon>Bacillati</taxon>
        <taxon>Cyanobacteriota</taxon>
        <taxon>Cyanophyceae</taxon>
        <taxon>Nostocales</taxon>
        <taxon>Nostocaceae</taxon>
        <taxon>Nostoc</taxon>
    </lineage>
</organism>
<evidence type="ECO:0000255" key="1">
    <source>
        <dbReference type="HAMAP-Rule" id="MF_00278"/>
    </source>
</evidence>
<comment type="function">
    <text evidence="1">IGPS catalyzes the conversion of PRFAR and glutamine to IGP, AICAR and glutamate. The HisH subunit catalyzes the hydrolysis of glutamine to glutamate and ammonia as part of the synthesis of IGP and AICAR. The resulting ammonia molecule is channeled to the active site of HisF.</text>
</comment>
<comment type="catalytic activity">
    <reaction evidence="1">
        <text>5-[(5-phospho-1-deoxy-D-ribulos-1-ylimino)methylamino]-1-(5-phospho-beta-D-ribosyl)imidazole-4-carboxamide + L-glutamine = D-erythro-1-(imidazol-4-yl)glycerol 3-phosphate + 5-amino-1-(5-phospho-beta-D-ribosyl)imidazole-4-carboxamide + L-glutamate + H(+)</text>
        <dbReference type="Rhea" id="RHEA:24793"/>
        <dbReference type="ChEBI" id="CHEBI:15378"/>
        <dbReference type="ChEBI" id="CHEBI:29985"/>
        <dbReference type="ChEBI" id="CHEBI:58278"/>
        <dbReference type="ChEBI" id="CHEBI:58359"/>
        <dbReference type="ChEBI" id="CHEBI:58475"/>
        <dbReference type="ChEBI" id="CHEBI:58525"/>
        <dbReference type="EC" id="4.3.2.10"/>
    </reaction>
</comment>
<comment type="catalytic activity">
    <reaction evidence="1">
        <text>L-glutamine + H2O = L-glutamate + NH4(+)</text>
        <dbReference type="Rhea" id="RHEA:15889"/>
        <dbReference type="ChEBI" id="CHEBI:15377"/>
        <dbReference type="ChEBI" id="CHEBI:28938"/>
        <dbReference type="ChEBI" id="CHEBI:29985"/>
        <dbReference type="ChEBI" id="CHEBI:58359"/>
        <dbReference type="EC" id="3.5.1.2"/>
    </reaction>
</comment>
<comment type="pathway">
    <text evidence="1">Amino-acid biosynthesis; L-histidine biosynthesis; L-histidine from 5-phospho-alpha-D-ribose 1-diphosphate: step 5/9.</text>
</comment>
<comment type="subunit">
    <text evidence="1">Heterodimer of HisH and HisF.</text>
</comment>
<comment type="subcellular location">
    <subcellularLocation>
        <location evidence="1">Cytoplasm</location>
    </subcellularLocation>
</comment>
<reference key="1">
    <citation type="journal article" date="2001" name="DNA Res.">
        <title>Complete genomic sequence of the filamentous nitrogen-fixing cyanobacterium Anabaena sp. strain PCC 7120.</title>
        <authorList>
            <person name="Kaneko T."/>
            <person name="Nakamura Y."/>
            <person name="Wolk C.P."/>
            <person name="Kuritz T."/>
            <person name="Sasamoto S."/>
            <person name="Watanabe A."/>
            <person name="Iriguchi M."/>
            <person name="Ishikawa A."/>
            <person name="Kawashima K."/>
            <person name="Kimura T."/>
            <person name="Kishida Y."/>
            <person name="Kohara M."/>
            <person name="Matsumoto M."/>
            <person name="Matsuno A."/>
            <person name="Muraki A."/>
            <person name="Nakazaki N."/>
            <person name="Shimpo S."/>
            <person name="Sugimoto M."/>
            <person name="Takazawa M."/>
            <person name="Yamada M."/>
            <person name="Yasuda M."/>
            <person name="Tabata S."/>
        </authorList>
    </citation>
    <scope>NUCLEOTIDE SEQUENCE [LARGE SCALE GENOMIC DNA]</scope>
    <source>
        <strain>PCC 7120 / SAG 25.82 / UTEX 2576</strain>
    </source>
</reference>
<keyword id="KW-0028">Amino-acid biosynthesis</keyword>
<keyword id="KW-0963">Cytoplasm</keyword>
<keyword id="KW-0315">Glutamine amidotransferase</keyword>
<keyword id="KW-0368">Histidine biosynthesis</keyword>
<keyword id="KW-0378">Hydrolase</keyword>
<keyword id="KW-0456">Lyase</keyword>
<keyword id="KW-1185">Reference proteome</keyword>
<feature type="chain" id="PRO_0000152334" description="Imidazole glycerol phosphate synthase subunit HisH">
    <location>
        <begin position="1"/>
        <end position="211"/>
    </location>
</feature>
<feature type="domain" description="Glutamine amidotransferase type-1" evidence="1">
    <location>
        <begin position="3"/>
        <end position="211"/>
    </location>
</feature>
<feature type="active site" description="Nucleophile" evidence="1">
    <location>
        <position position="81"/>
    </location>
</feature>
<feature type="active site" evidence="1">
    <location>
        <position position="186"/>
    </location>
</feature>
<feature type="active site" evidence="1">
    <location>
        <position position="188"/>
    </location>
</feature>
<name>HIS5_NOSS1</name>
<dbReference type="EC" id="4.3.2.10" evidence="1"/>
<dbReference type="EC" id="3.5.1.2" evidence="1"/>
<dbReference type="EMBL" id="BA000019">
    <property type="protein sequence ID" value="BAB73325.1"/>
    <property type="molecule type" value="Genomic_DNA"/>
</dbReference>
<dbReference type="PIR" id="AE1977">
    <property type="entry name" value="AE1977"/>
</dbReference>
<dbReference type="RefSeq" id="WP_010995540.1">
    <property type="nucleotide sequence ID" value="NZ_RSCN01000029.1"/>
</dbReference>
<dbReference type="SMR" id="Q8YX49"/>
<dbReference type="STRING" id="103690.gene:10493383"/>
<dbReference type="KEGG" id="ana:all1368"/>
<dbReference type="eggNOG" id="COG0118">
    <property type="taxonomic scope" value="Bacteria"/>
</dbReference>
<dbReference type="OrthoDB" id="9807137at2"/>
<dbReference type="UniPathway" id="UPA00031">
    <property type="reaction ID" value="UER00010"/>
</dbReference>
<dbReference type="Proteomes" id="UP000002483">
    <property type="component" value="Chromosome"/>
</dbReference>
<dbReference type="GO" id="GO:0005737">
    <property type="term" value="C:cytoplasm"/>
    <property type="evidence" value="ECO:0007669"/>
    <property type="project" value="UniProtKB-SubCell"/>
</dbReference>
<dbReference type="GO" id="GO:0004359">
    <property type="term" value="F:glutaminase activity"/>
    <property type="evidence" value="ECO:0007669"/>
    <property type="project" value="UniProtKB-EC"/>
</dbReference>
<dbReference type="GO" id="GO:0000107">
    <property type="term" value="F:imidazoleglycerol-phosphate synthase activity"/>
    <property type="evidence" value="ECO:0007669"/>
    <property type="project" value="UniProtKB-UniRule"/>
</dbReference>
<dbReference type="GO" id="GO:0016829">
    <property type="term" value="F:lyase activity"/>
    <property type="evidence" value="ECO:0007669"/>
    <property type="project" value="UniProtKB-KW"/>
</dbReference>
<dbReference type="GO" id="GO:0000105">
    <property type="term" value="P:L-histidine biosynthetic process"/>
    <property type="evidence" value="ECO:0007669"/>
    <property type="project" value="UniProtKB-UniRule"/>
</dbReference>
<dbReference type="CDD" id="cd01748">
    <property type="entry name" value="GATase1_IGP_Synthase"/>
    <property type="match status" value="1"/>
</dbReference>
<dbReference type="FunFam" id="3.40.50.880:FF:000009">
    <property type="entry name" value="Imidazole glycerol phosphate synthase subunit HisH"/>
    <property type="match status" value="1"/>
</dbReference>
<dbReference type="Gene3D" id="3.40.50.880">
    <property type="match status" value="1"/>
</dbReference>
<dbReference type="HAMAP" id="MF_00278">
    <property type="entry name" value="HisH"/>
    <property type="match status" value="1"/>
</dbReference>
<dbReference type="InterPro" id="IPR029062">
    <property type="entry name" value="Class_I_gatase-like"/>
</dbReference>
<dbReference type="InterPro" id="IPR017926">
    <property type="entry name" value="GATASE"/>
</dbReference>
<dbReference type="InterPro" id="IPR010139">
    <property type="entry name" value="Imidazole-glycPsynth_HisH"/>
</dbReference>
<dbReference type="NCBIfam" id="TIGR01855">
    <property type="entry name" value="IMP_synth_hisH"/>
    <property type="match status" value="1"/>
</dbReference>
<dbReference type="PANTHER" id="PTHR42701">
    <property type="entry name" value="IMIDAZOLE GLYCEROL PHOSPHATE SYNTHASE SUBUNIT HISH"/>
    <property type="match status" value="1"/>
</dbReference>
<dbReference type="PANTHER" id="PTHR42701:SF1">
    <property type="entry name" value="IMIDAZOLE GLYCEROL PHOSPHATE SYNTHASE SUBUNIT HISH"/>
    <property type="match status" value="1"/>
</dbReference>
<dbReference type="Pfam" id="PF00117">
    <property type="entry name" value="GATase"/>
    <property type="match status" value="1"/>
</dbReference>
<dbReference type="PIRSF" id="PIRSF000495">
    <property type="entry name" value="Amidotransf_hisH"/>
    <property type="match status" value="1"/>
</dbReference>
<dbReference type="SUPFAM" id="SSF52317">
    <property type="entry name" value="Class I glutamine amidotransferase-like"/>
    <property type="match status" value="1"/>
</dbReference>
<dbReference type="PROSITE" id="PS51273">
    <property type="entry name" value="GATASE_TYPE_1"/>
    <property type="match status" value="1"/>
</dbReference>
<protein>
    <recommendedName>
        <fullName evidence="1">Imidazole glycerol phosphate synthase subunit HisH</fullName>
        <ecNumber evidence="1">4.3.2.10</ecNumber>
    </recommendedName>
    <alternativeName>
        <fullName evidence="1">IGP synthase glutaminase subunit</fullName>
        <ecNumber evidence="1">3.5.1.2</ecNumber>
    </alternativeName>
    <alternativeName>
        <fullName evidence="1">IGP synthase subunit HisH</fullName>
    </alternativeName>
    <alternativeName>
        <fullName evidence="1">ImGP synthase subunit HisH</fullName>
        <shortName evidence="1">IGPS subunit HisH</shortName>
    </alternativeName>
</protein>
<accession>Q8YX49</accession>